<feature type="signal peptide" evidence="1">
    <location>
        <begin position="1"/>
        <end position="19"/>
    </location>
</feature>
<feature type="chain" id="PRO_0000005681" description="Lysis protein for colicins E2 and E3">
    <location>
        <begin position="20"/>
        <end position="47"/>
    </location>
</feature>
<feature type="lipid moiety-binding region" description="N-palmitoyl cysteine" evidence="1">
    <location>
        <position position="20"/>
    </location>
</feature>
<feature type="lipid moiety-binding region" description="S-diacylglycerol cysteine" evidence="1">
    <location>
        <position position="20"/>
    </location>
</feature>
<protein>
    <recommendedName>
        <fullName>Lysis protein for colicins E2 and E3</fullName>
    </recommendedName>
</protein>
<comment type="function">
    <text>Lysis proteins are required for both colicin release and partial cell lysis.</text>
</comment>
<comment type="subcellular location">
    <subcellularLocation>
        <location evidence="2">Cell outer membrane</location>
        <topology evidence="1">Lipid-anchor</topology>
    </subcellularLocation>
</comment>
<sequence length="47" mass="4860">MKKITGIILLLLAVIILSACQANYIRDVQGGTVSPSSTAEVTGLATQ</sequence>
<gene>
    <name type="primary">hic</name>
    <name type="synonym">celB</name>
</gene>
<proteinExistence type="inferred from homology"/>
<accession>P06963</accession>
<dbReference type="EMBL" id="X02397">
    <property type="protein sequence ID" value="CAA26243.1"/>
    <property type="molecule type" value="Genomic_DNA"/>
</dbReference>
<dbReference type="EMBL" id="D00021">
    <property type="protein sequence ID" value="BAA00015.1"/>
    <property type="molecule type" value="Genomic_DNA"/>
</dbReference>
<dbReference type="EMBL" id="J01574">
    <property type="protein sequence ID" value="AAA88419.1"/>
    <property type="molecule type" value="Genomic_DNA"/>
</dbReference>
<dbReference type="EMBL" id="X03631">
    <property type="protein sequence ID" value="CAA27281.1"/>
    <property type="molecule type" value="Genomic_DNA"/>
</dbReference>
<dbReference type="EMBL" id="X03632">
    <property type="protein sequence ID" value="CAA27282.1"/>
    <property type="molecule type" value="Genomic_DNA"/>
</dbReference>
<dbReference type="EMBL" id="M29885">
    <property type="protein sequence ID" value="AAA23070.1"/>
    <property type="molecule type" value="Genomic_DNA"/>
</dbReference>
<dbReference type="PIR" id="A91514">
    <property type="entry name" value="BVECH8"/>
</dbReference>
<dbReference type="RefSeq" id="WP_000724383.1">
    <property type="nucleotide sequence ID" value="NZ_WXYX01000010.1"/>
</dbReference>
<dbReference type="GO" id="GO:0009279">
    <property type="term" value="C:cell outer membrane"/>
    <property type="evidence" value="ECO:0007669"/>
    <property type="project" value="UniProtKB-SubCell"/>
</dbReference>
<dbReference type="GO" id="GO:0019835">
    <property type="term" value="P:cytolysis"/>
    <property type="evidence" value="ECO:0007669"/>
    <property type="project" value="InterPro"/>
</dbReference>
<dbReference type="InterPro" id="IPR003059">
    <property type="entry name" value="Lysis_col"/>
</dbReference>
<dbReference type="Pfam" id="PF02402">
    <property type="entry name" value="Lysis_col"/>
    <property type="match status" value="1"/>
</dbReference>
<dbReference type="PRINTS" id="PR01297">
    <property type="entry name" value="LYSISCOLICIN"/>
</dbReference>
<dbReference type="PROSITE" id="PS51257">
    <property type="entry name" value="PROKAR_LIPOPROTEIN"/>
    <property type="match status" value="1"/>
</dbReference>
<organism>
    <name type="scientific">Escherichia coli</name>
    <dbReference type="NCBI Taxonomy" id="562"/>
    <lineage>
        <taxon>Bacteria</taxon>
        <taxon>Pseudomonadati</taxon>
        <taxon>Pseudomonadota</taxon>
        <taxon>Gammaproteobacteria</taxon>
        <taxon>Enterobacterales</taxon>
        <taxon>Enterobacteriaceae</taxon>
        <taxon>Escherichia</taxon>
    </lineage>
</organism>
<reference key="1">
    <citation type="journal article" date="1986" name="J. Biochem.">
        <title>Primary structures of the ColE2-P9 and ColE3-CA38 lysis genes.</title>
        <authorList>
            <person name="Toba M."/>
            <person name="Masaki H."/>
            <person name="Ohta T."/>
        </authorList>
    </citation>
    <scope>NUCLEOTIDE SEQUENCE [GENOMIC DNA]</scope>
    <source>
        <plasmid>ColE2-P9</plasmid>
    </source>
</reference>
<reference key="2">
    <citation type="journal article" date="1985" name="Mol. Gen. Genet.">
        <title>Molecular characterisation of the colicin E2 operon and identification of its products.</title>
        <authorList>
            <person name="Cole S.T."/>
            <person name="Saint-Joanis B."/>
            <person name="Pugsley A.P."/>
        </authorList>
    </citation>
    <scope>NUCLEOTIDE SEQUENCE [GENOMIC DNA]</scope>
    <source>
        <plasmid>ColE2-P9</plasmid>
    </source>
</reference>
<reference key="3">
    <citation type="journal article" date="1984" name="Gene">
        <title>Characterization and nucleotide sequence of a colicin-release gene in the hic region of plasmid ColE3-CA38.</title>
        <authorList>
            <person name="Watson R.J."/>
            <person name="Lau P.C.K."/>
            <person name="Vernet T."/>
            <person name="Visentin L.P."/>
        </authorList>
    </citation>
    <scope>NUCLEOTIDE SEQUENCE [GENOMIC DNA]</scope>
    <source>
        <plasmid>ColE3-CA38</plasmid>
    </source>
</reference>
<reference key="4">
    <citation type="journal article" date="1986" name="Gene">
        <authorList>
            <person name="Watson R.J."/>
            <person name="Lau P.C.K."/>
            <person name="Vernet T."/>
            <person name="Visentin L.P."/>
        </authorList>
    </citation>
    <scope>ERRATUM OF PUBMED:6092219</scope>
</reference>
<reference key="5">
    <citation type="journal article" date="1985" name="J. Mol. Biol.">
        <title>Colicin E3 and its immunity genes.</title>
        <authorList>
            <person name="Masaki H."/>
            <person name="Ohta T."/>
        </authorList>
    </citation>
    <scope>NUCLEOTIDE SEQUENCE [GENOMIC DNA] OF 1-38</scope>
    <source>
        <plasmid>ColE3-CA38</plasmid>
    </source>
</reference>
<name>LYS2_ECOLX</name>
<evidence type="ECO:0000255" key="1">
    <source>
        <dbReference type="PROSITE-ProRule" id="PRU00303"/>
    </source>
</evidence>
<evidence type="ECO:0000305" key="2"/>
<keyword id="KW-0998">Cell outer membrane</keyword>
<keyword id="KW-0449">Lipoprotein</keyword>
<keyword id="KW-0472">Membrane</keyword>
<keyword id="KW-0564">Palmitate</keyword>
<keyword id="KW-0614">Plasmid</keyword>
<keyword id="KW-0732">Signal</keyword>
<geneLocation type="plasmid">
    <name>ColE2-P9</name>
</geneLocation>
<geneLocation type="plasmid">
    <name>ColE3-CA38</name>
</geneLocation>